<organism>
    <name type="scientific">Francisella tularensis subsp. tularensis (strain SCHU S4 / Schu 4)</name>
    <dbReference type="NCBI Taxonomy" id="177416"/>
    <lineage>
        <taxon>Bacteria</taxon>
        <taxon>Pseudomonadati</taxon>
        <taxon>Pseudomonadota</taxon>
        <taxon>Gammaproteobacteria</taxon>
        <taxon>Thiotrichales</taxon>
        <taxon>Francisellaceae</taxon>
        <taxon>Francisella</taxon>
    </lineage>
</organism>
<dbReference type="EC" id="7.1.1.-" evidence="1"/>
<dbReference type="EMBL" id="AJ749949">
    <property type="protein sequence ID" value="CAG44671.1"/>
    <property type="molecule type" value="Genomic_DNA"/>
</dbReference>
<dbReference type="RefSeq" id="WP_003017378.1">
    <property type="nucleotide sequence ID" value="NZ_CP010290.1"/>
</dbReference>
<dbReference type="RefSeq" id="YP_169114.1">
    <property type="nucleotide sequence ID" value="NC_006570.2"/>
</dbReference>
<dbReference type="SMR" id="Q5NIM8"/>
<dbReference type="STRING" id="177416.FTT_0038"/>
<dbReference type="DNASU" id="3191826"/>
<dbReference type="EnsemblBacteria" id="CAG44671">
    <property type="protein sequence ID" value="CAG44671"/>
    <property type="gene ID" value="FTT_0038"/>
</dbReference>
<dbReference type="KEGG" id="ftu:FTT_0038"/>
<dbReference type="eggNOG" id="COG1005">
    <property type="taxonomic scope" value="Bacteria"/>
</dbReference>
<dbReference type="OrthoDB" id="9803734at2"/>
<dbReference type="Proteomes" id="UP000001174">
    <property type="component" value="Chromosome"/>
</dbReference>
<dbReference type="GO" id="GO:0005886">
    <property type="term" value="C:plasma membrane"/>
    <property type="evidence" value="ECO:0007669"/>
    <property type="project" value="UniProtKB-SubCell"/>
</dbReference>
<dbReference type="GO" id="GO:0003954">
    <property type="term" value="F:NADH dehydrogenase activity"/>
    <property type="evidence" value="ECO:0007669"/>
    <property type="project" value="TreeGrafter"/>
</dbReference>
<dbReference type="GO" id="GO:0016655">
    <property type="term" value="F:oxidoreductase activity, acting on NAD(P)H, quinone or similar compound as acceptor"/>
    <property type="evidence" value="ECO:0007669"/>
    <property type="project" value="UniProtKB-UniRule"/>
</dbReference>
<dbReference type="GO" id="GO:0048038">
    <property type="term" value="F:quinone binding"/>
    <property type="evidence" value="ECO:0007669"/>
    <property type="project" value="UniProtKB-KW"/>
</dbReference>
<dbReference type="GO" id="GO:0009060">
    <property type="term" value="P:aerobic respiration"/>
    <property type="evidence" value="ECO:0007669"/>
    <property type="project" value="TreeGrafter"/>
</dbReference>
<dbReference type="HAMAP" id="MF_01350">
    <property type="entry name" value="NDH1_NuoH"/>
    <property type="match status" value="1"/>
</dbReference>
<dbReference type="InterPro" id="IPR001694">
    <property type="entry name" value="NADH_UbQ_OxRdtase_su1/FPO"/>
</dbReference>
<dbReference type="InterPro" id="IPR018086">
    <property type="entry name" value="NADH_UbQ_OxRdtase_su1_CS"/>
</dbReference>
<dbReference type="NCBIfam" id="NF004741">
    <property type="entry name" value="PRK06076.1-2"/>
    <property type="match status" value="1"/>
</dbReference>
<dbReference type="PANTHER" id="PTHR11432">
    <property type="entry name" value="NADH DEHYDROGENASE SUBUNIT 1"/>
    <property type="match status" value="1"/>
</dbReference>
<dbReference type="PANTHER" id="PTHR11432:SF3">
    <property type="entry name" value="NADH-UBIQUINONE OXIDOREDUCTASE CHAIN 1"/>
    <property type="match status" value="1"/>
</dbReference>
<dbReference type="Pfam" id="PF00146">
    <property type="entry name" value="NADHdh"/>
    <property type="match status" value="1"/>
</dbReference>
<dbReference type="PROSITE" id="PS00667">
    <property type="entry name" value="COMPLEX1_ND1_1"/>
    <property type="match status" value="1"/>
</dbReference>
<dbReference type="PROSITE" id="PS00668">
    <property type="entry name" value="COMPLEX1_ND1_2"/>
    <property type="match status" value="1"/>
</dbReference>
<feature type="chain" id="PRO_0000240072" description="NADH-quinone oxidoreductase subunit H">
    <location>
        <begin position="1"/>
        <end position="336"/>
    </location>
</feature>
<feature type="transmembrane region" description="Helical" evidence="1">
    <location>
        <begin position="4"/>
        <end position="24"/>
    </location>
</feature>
<feature type="transmembrane region" description="Helical" evidence="1">
    <location>
        <begin position="75"/>
        <end position="95"/>
    </location>
</feature>
<feature type="transmembrane region" description="Helical" evidence="1">
    <location>
        <begin position="108"/>
        <end position="128"/>
    </location>
</feature>
<feature type="transmembrane region" description="Helical" evidence="1">
    <location>
        <begin position="154"/>
        <end position="174"/>
    </location>
</feature>
<feature type="transmembrane region" description="Helical" evidence="1">
    <location>
        <begin position="181"/>
        <end position="201"/>
    </location>
</feature>
<feature type="transmembrane region" description="Helical" evidence="1">
    <location>
        <begin position="233"/>
        <end position="253"/>
    </location>
</feature>
<feature type="transmembrane region" description="Helical" evidence="1">
    <location>
        <begin position="272"/>
        <end position="292"/>
    </location>
</feature>
<feature type="transmembrane region" description="Helical" evidence="1">
    <location>
        <begin position="308"/>
        <end position="328"/>
    </location>
</feature>
<accession>Q5NIM8</accession>
<comment type="function">
    <text evidence="1">NDH-1 shuttles electrons from NADH, via FMN and iron-sulfur (Fe-S) centers, to quinones in the respiratory chain. The immediate electron acceptor for the enzyme in this species is believed to be ubiquinone. Couples the redox reaction to proton translocation (for every two electrons transferred, four hydrogen ions are translocated across the cytoplasmic membrane), and thus conserves the redox energy in a proton gradient. This subunit may bind ubiquinone.</text>
</comment>
<comment type="catalytic activity">
    <reaction evidence="1">
        <text>a quinone + NADH + 5 H(+)(in) = a quinol + NAD(+) + 4 H(+)(out)</text>
        <dbReference type="Rhea" id="RHEA:57888"/>
        <dbReference type="ChEBI" id="CHEBI:15378"/>
        <dbReference type="ChEBI" id="CHEBI:24646"/>
        <dbReference type="ChEBI" id="CHEBI:57540"/>
        <dbReference type="ChEBI" id="CHEBI:57945"/>
        <dbReference type="ChEBI" id="CHEBI:132124"/>
    </reaction>
</comment>
<comment type="subunit">
    <text evidence="1">NDH-1 is composed of 14 different subunits. Subunits NuoA, H, J, K, L, M, N constitute the membrane sector of the complex.</text>
</comment>
<comment type="subcellular location">
    <subcellularLocation>
        <location evidence="1">Cell inner membrane</location>
        <topology evidence="1">Multi-pass membrane protein</topology>
    </subcellularLocation>
</comment>
<comment type="similarity">
    <text evidence="1">Belongs to the complex I subunit 1 family.</text>
</comment>
<protein>
    <recommendedName>
        <fullName evidence="1">NADH-quinone oxidoreductase subunit H</fullName>
        <ecNumber evidence="1">7.1.1.-</ecNumber>
    </recommendedName>
    <alternativeName>
        <fullName evidence="1">NADH dehydrogenase I subunit H</fullName>
    </alternativeName>
    <alternativeName>
        <fullName evidence="1">NDH-1 subunit H</fullName>
    </alternativeName>
</protein>
<name>NUOH_FRATT</name>
<proteinExistence type="inferred from homology"/>
<keyword id="KW-0997">Cell inner membrane</keyword>
<keyword id="KW-1003">Cell membrane</keyword>
<keyword id="KW-0472">Membrane</keyword>
<keyword id="KW-0520">NAD</keyword>
<keyword id="KW-0874">Quinone</keyword>
<keyword id="KW-1185">Reference proteome</keyword>
<keyword id="KW-1278">Translocase</keyword>
<keyword id="KW-0812">Transmembrane</keyword>
<keyword id="KW-1133">Transmembrane helix</keyword>
<keyword id="KW-0830">Ubiquinone</keyword>
<evidence type="ECO:0000255" key="1">
    <source>
        <dbReference type="HAMAP-Rule" id="MF_01350"/>
    </source>
</evidence>
<gene>
    <name evidence="1" type="primary">nuoH</name>
    <name type="ordered locus">FTT_0038</name>
</gene>
<sequence>MLGYILWTSLYVLLIVIPLILVVAYYTYAERKVIGYMQDRIGPNRVGSFGLLQPIFDALKLFLKEIIVPTNSNRYLFFIAPILAFAPAYAAWAVIPFSKGVVLSDMNLGLLYILAMTSFSIYGIVIAGWASNSKYSLFGALRAGAQVISYELAMGFAIVGVVIAAGSMGITGIIEAQSGGIWHWYFIPLFPLFIVYFIAGIAETNRAPFDVVEGESEIVAGHHIEYTGSRFALFFLAEYANMILISILTSIMFLGGWNSPFQATALESIFGFVPGVVWLFAKTGIFMFMFLWVRATYPRYRYDQIMRLGWKIFIPLTFVWVVIVACMVRLGVGPWW</sequence>
<reference key="1">
    <citation type="journal article" date="2005" name="Nat. Genet.">
        <title>The complete genome sequence of Francisella tularensis, the causative agent of tularemia.</title>
        <authorList>
            <person name="Larsson P."/>
            <person name="Oyston P.C.F."/>
            <person name="Chain P."/>
            <person name="Chu M.C."/>
            <person name="Duffield M."/>
            <person name="Fuxelius H.-H."/>
            <person name="Garcia E."/>
            <person name="Haelltorp G."/>
            <person name="Johansson D."/>
            <person name="Isherwood K.E."/>
            <person name="Karp P.D."/>
            <person name="Larsson E."/>
            <person name="Liu Y."/>
            <person name="Michell S."/>
            <person name="Prior J."/>
            <person name="Prior R."/>
            <person name="Malfatti S."/>
            <person name="Sjoestedt A."/>
            <person name="Svensson K."/>
            <person name="Thompson N."/>
            <person name="Vergez L."/>
            <person name="Wagg J.K."/>
            <person name="Wren B.W."/>
            <person name="Lindler L.E."/>
            <person name="Andersson S.G.E."/>
            <person name="Forsman M."/>
            <person name="Titball R.W."/>
        </authorList>
    </citation>
    <scope>NUCLEOTIDE SEQUENCE [LARGE SCALE GENOMIC DNA]</scope>
    <source>
        <strain>SCHU S4 / Schu 4</strain>
    </source>
</reference>